<comment type="catalytic activity">
    <reaction evidence="1">
        <text>tRNA(Cys) + L-cysteine + ATP = L-cysteinyl-tRNA(Cys) + AMP + diphosphate</text>
        <dbReference type="Rhea" id="RHEA:17773"/>
        <dbReference type="Rhea" id="RHEA-COMP:9661"/>
        <dbReference type="Rhea" id="RHEA-COMP:9679"/>
        <dbReference type="ChEBI" id="CHEBI:30616"/>
        <dbReference type="ChEBI" id="CHEBI:33019"/>
        <dbReference type="ChEBI" id="CHEBI:35235"/>
        <dbReference type="ChEBI" id="CHEBI:78442"/>
        <dbReference type="ChEBI" id="CHEBI:78517"/>
        <dbReference type="ChEBI" id="CHEBI:456215"/>
        <dbReference type="EC" id="6.1.1.16"/>
    </reaction>
</comment>
<comment type="cofactor">
    <cofactor evidence="1">
        <name>Zn(2+)</name>
        <dbReference type="ChEBI" id="CHEBI:29105"/>
    </cofactor>
    <text evidence="1">Binds 1 zinc ion per subunit.</text>
</comment>
<comment type="subunit">
    <text evidence="1">Monomer.</text>
</comment>
<comment type="subcellular location">
    <subcellularLocation>
        <location evidence="1">Cytoplasm</location>
    </subcellularLocation>
</comment>
<comment type="similarity">
    <text evidence="1">Belongs to the class-I aminoacyl-tRNA synthetase family.</text>
</comment>
<name>SYC_HELP2</name>
<dbReference type="EC" id="6.1.1.16" evidence="1"/>
<dbReference type="EMBL" id="CP001217">
    <property type="protein sequence ID" value="ACJ08035.1"/>
    <property type="molecule type" value="Genomic_DNA"/>
</dbReference>
<dbReference type="SMR" id="B6JMA7"/>
<dbReference type="KEGG" id="hpp:HPP12_0883"/>
<dbReference type="HOGENOM" id="CLU_013528_0_1_7"/>
<dbReference type="Proteomes" id="UP000008198">
    <property type="component" value="Chromosome"/>
</dbReference>
<dbReference type="GO" id="GO:0005829">
    <property type="term" value="C:cytosol"/>
    <property type="evidence" value="ECO:0007669"/>
    <property type="project" value="TreeGrafter"/>
</dbReference>
<dbReference type="GO" id="GO:0005524">
    <property type="term" value="F:ATP binding"/>
    <property type="evidence" value="ECO:0007669"/>
    <property type="project" value="UniProtKB-UniRule"/>
</dbReference>
<dbReference type="GO" id="GO:0004817">
    <property type="term" value="F:cysteine-tRNA ligase activity"/>
    <property type="evidence" value="ECO:0007669"/>
    <property type="project" value="UniProtKB-UniRule"/>
</dbReference>
<dbReference type="GO" id="GO:0008270">
    <property type="term" value="F:zinc ion binding"/>
    <property type="evidence" value="ECO:0007669"/>
    <property type="project" value="UniProtKB-UniRule"/>
</dbReference>
<dbReference type="GO" id="GO:0006423">
    <property type="term" value="P:cysteinyl-tRNA aminoacylation"/>
    <property type="evidence" value="ECO:0007669"/>
    <property type="project" value="UniProtKB-UniRule"/>
</dbReference>
<dbReference type="CDD" id="cd00672">
    <property type="entry name" value="CysRS_core"/>
    <property type="match status" value="1"/>
</dbReference>
<dbReference type="FunFam" id="1.20.120.1910:FF:000013">
    <property type="entry name" value="Cysteine--tRNA ligase"/>
    <property type="match status" value="1"/>
</dbReference>
<dbReference type="FunFam" id="3.40.50.620:FF:000339">
    <property type="entry name" value="Cysteine--tRNA ligase"/>
    <property type="match status" value="1"/>
</dbReference>
<dbReference type="Gene3D" id="1.20.120.1910">
    <property type="entry name" value="Cysteine-tRNA ligase, C-terminal anti-codon recognition domain"/>
    <property type="match status" value="1"/>
</dbReference>
<dbReference type="Gene3D" id="3.40.50.620">
    <property type="entry name" value="HUPs"/>
    <property type="match status" value="1"/>
</dbReference>
<dbReference type="HAMAP" id="MF_00041">
    <property type="entry name" value="Cys_tRNA_synth"/>
    <property type="match status" value="1"/>
</dbReference>
<dbReference type="InterPro" id="IPR015803">
    <property type="entry name" value="Cys-tRNA-ligase"/>
</dbReference>
<dbReference type="InterPro" id="IPR015273">
    <property type="entry name" value="Cys-tRNA-synt_Ia_DALR"/>
</dbReference>
<dbReference type="InterPro" id="IPR024909">
    <property type="entry name" value="Cys-tRNA/MSH_ligase"/>
</dbReference>
<dbReference type="InterPro" id="IPR014729">
    <property type="entry name" value="Rossmann-like_a/b/a_fold"/>
</dbReference>
<dbReference type="InterPro" id="IPR032678">
    <property type="entry name" value="tRNA-synt_1_cat_dom"/>
</dbReference>
<dbReference type="InterPro" id="IPR009080">
    <property type="entry name" value="tRNAsynth_Ia_anticodon-bd"/>
</dbReference>
<dbReference type="NCBIfam" id="TIGR00435">
    <property type="entry name" value="cysS"/>
    <property type="match status" value="1"/>
</dbReference>
<dbReference type="PANTHER" id="PTHR10890:SF3">
    <property type="entry name" value="CYSTEINE--TRNA LIGASE, CYTOPLASMIC"/>
    <property type="match status" value="1"/>
</dbReference>
<dbReference type="PANTHER" id="PTHR10890">
    <property type="entry name" value="CYSTEINYL-TRNA SYNTHETASE"/>
    <property type="match status" value="1"/>
</dbReference>
<dbReference type="Pfam" id="PF09190">
    <property type="entry name" value="DALR_2"/>
    <property type="match status" value="1"/>
</dbReference>
<dbReference type="Pfam" id="PF01406">
    <property type="entry name" value="tRNA-synt_1e"/>
    <property type="match status" value="1"/>
</dbReference>
<dbReference type="PRINTS" id="PR00983">
    <property type="entry name" value="TRNASYNTHCYS"/>
</dbReference>
<dbReference type="SMART" id="SM00840">
    <property type="entry name" value="DALR_2"/>
    <property type="match status" value="1"/>
</dbReference>
<dbReference type="SUPFAM" id="SSF47323">
    <property type="entry name" value="Anticodon-binding domain of a subclass of class I aminoacyl-tRNA synthetases"/>
    <property type="match status" value="1"/>
</dbReference>
<dbReference type="SUPFAM" id="SSF52374">
    <property type="entry name" value="Nucleotidylyl transferase"/>
    <property type="match status" value="1"/>
</dbReference>
<sequence length="465" mass="53128">MFIYDTKSKQKVPFEPLVQNKANIYVCGPTVYDDAHLGHARSAIAFDLLRRTLELSGYEVVLVRNFTDIDDKIINKAFKENKSIQELSSIYIESYTRDLNALNVKKPSLEPKASEYLDAMVRMIETLLEKNFAYQVSNGDIYLDTSKDKDYGSLSMHNSSVEFSRIGLVQEKRLEQDFVLWKSYKGDNDVGFDSPLGKGRPGWHIECSSMVFETLALANAPYQIDIHAGGADLLFPHHENEACQTRCAFGVELAKYWMHNGFVNINNEKMSKSLGNSFFIKDALKNYDGEILRNYLLGVHYRSVLNFNEEDLLVSKKRLDKIYRLKQRVLGTLGGINPNFKKEILECMQDDLNVSKALSVLESMLSSTNEKLDQNPKNKALKGEILANLKFIEELLGIGVKDPSAYFQLGVSESEKQEIENKIEERKRAKEQKDFLKADSIREELLNHKIALMDTPQGTIWEKLF</sequence>
<proteinExistence type="inferred from homology"/>
<organism>
    <name type="scientific">Helicobacter pylori (strain P12)</name>
    <dbReference type="NCBI Taxonomy" id="570508"/>
    <lineage>
        <taxon>Bacteria</taxon>
        <taxon>Pseudomonadati</taxon>
        <taxon>Campylobacterota</taxon>
        <taxon>Epsilonproteobacteria</taxon>
        <taxon>Campylobacterales</taxon>
        <taxon>Helicobacteraceae</taxon>
        <taxon>Helicobacter</taxon>
    </lineage>
</organism>
<keyword id="KW-0030">Aminoacyl-tRNA synthetase</keyword>
<keyword id="KW-0067">ATP-binding</keyword>
<keyword id="KW-0963">Cytoplasm</keyword>
<keyword id="KW-0436">Ligase</keyword>
<keyword id="KW-0479">Metal-binding</keyword>
<keyword id="KW-0547">Nucleotide-binding</keyword>
<keyword id="KW-0648">Protein biosynthesis</keyword>
<keyword id="KW-0862">Zinc</keyword>
<evidence type="ECO:0000255" key="1">
    <source>
        <dbReference type="HAMAP-Rule" id="MF_00041"/>
    </source>
</evidence>
<reference key="1">
    <citation type="submission" date="2008-10" db="EMBL/GenBank/DDBJ databases">
        <title>The complete genome sequence of Helicobacter pylori strain P12.</title>
        <authorList>
            <person name="Fischer W."/>
            <person name="Windhager L."/>
            <person name="Karnholz A."/>
            <person name="Zeiller M."/>
            <person name="Zimmer R."/>
            <person name="Haas R."/>
        </authorList>
    </citation>
    <scope>NUCLEOTIDE SEQUENCE [LARGE SCALE GENOMIC DNA]</scope>
    <source>
        <strain>P12</strain>
    </source>
</reference>
<protein>
    <recommendedName>
        <fullName evidence="1">Cysteine--tRNA ligase</fullName>
        <ecNumber evidence="1">6.1.1.16</ecNumber>
    </recommendedName>
    <alternativeName>
        <fullName evidence="1">Cysteinyl-tRNA synthetase</fullName>
        <shortName evidence="1">CysRS</shortName>
    </alternativeName>
</protein>
<gene>
    <name evidence="1" type="primary">cysS</name>
    <name type="ordered locus">HPP12_0883</name>
</gene>
<feature type="chain" id="PRO_1000090843" description="Cysteine--tRNA ligase">
    <location>
        <begin position="1"/>
        <end position="465"/>
    </location>
</feature>
<feature type="short sequence motif" description="'HIGH' region">
    <location>
        <begin position="29"/>
        <end position="39"/>
    </location>
</feature>
<feature type="short sequence motif" description="'KMSKS' region">
    <location>
        <begin position="269"/>
        <end position="273"/>
    </location>
</feature>
<feature type="binding site" evidence="1">
    <location>
        <position position="27"/>
    </location>
    <ligand>
        <name>Zn(2+)</name>
        <dbReference type="ChEBI" id="CHEBI:29105"/>
    </ligand>
</feature>
<feature type="binding site" evidence="1">
    <location>
        <position position="207"/>
    </location>
    <ligand>
        <name>Zn(2+)</name>
        <dbReference type="ChEBI" id="CHEBI:29105"/>
    </ligand>
</feature>
<feature type="binding site" evidence="1">
    <location>
        <position position="237"/>
    </location>
    <ligand>
        <name>Zn(2+)</name>
        <dbReference type="ChEBI" id="CHEBI:29105"/>
    </ligand>
</feature>
<feature type="binding site" evidence="1">
    <location>
        <position position="241"/>
    </location>
    <ligand>
        <name>Zn(2+)</name>
        <dbReference type="ChEBI" id="CHEBI:29105"/>
    </ligand>
</feature>
<feature type="binding site" evidence="1">
    <location>
        <position position="272"/>
    </location>
    <ligand>
        <name>ATP</name>
        <dbReference type="ChEBI" id="CHEBI:30616"/>
    </ligand>
</feature>
<accession>B6JMA7</accession>